<keyword id="KW-0378">Hydrolase</keyword>
<keyword id="KW-0460">Magnesium</keyword>
<keyword id="KW-0479">Metal-binding</keyword>
<keyword id="KW-0574">Periplasm</keyword>
<keyword id="KW-1185">Reference proteome</keyword>
<keyword id="KW-0732">Signal</keyword>
<gene>
    <name evidence="1" type="primary">aphA</name>
    <name type="ordered locus">SARI_03429</name>
</gene>
<comment type="function">
    <text evidence="1">Dephosphorylates several organic phosphate monoesters. Also has a phosphotransferase activity catalyzing the transfer of low-energy phosphate groups from organic phosphate monoesters to free hydroxyl groups of various organic compounds (By similarity).</text>
</comment>
<comment type="catalytic activity">
    <reaction evidence="1">
        <text>a phosphate monoester + H2O = an alcohol + phosphate</text>
        <dbReference type="Rhea" id="RHEA:15017"/>
        <dbReference type="ChEBI" id="CHEBI:15377"/>
        <dbReference type="ChEBI" id="CHEBI:30879"/>
        <dbReference type="ChEBI" id="CHEBI:43474"/>
        <dbReference type="ChEBI" id="CHEBI:67140"/>
        <dbReference type="EC" id="3.1.3.2"/>
    </reaction>
</comment>
<comment type="cofactor">
    <cofactor evidence="1">
        <name>Mg(2+)</name>
        <dbReference type="ChEBI" id="CHEBI:18420"/>
    </cofactor>
    <text evidence="1">Binds 1 Mg(2+) ion per subunit.</text>
</comment>
<comment type="subunit">
    <text evidence="1">Homotetramer.</text>
</comment>
<comment type="subcellular location">
    <subcellularLocation>
        <location evidence="1">Periplasm</location>
    </subcellularLocation>
</comment>
<comment type="similarity">
    <text evidence="1">Belongs to the class B bacterial acid phosphatase family.</text>
</comment>
<accession>A9MGN4</accession>
<organism>
    <name type="scientific">Salmonella arizonae (strain ATCC BAA-731 / CDC346-86 / RSK2980)</name>
    <dbReference type="NCBI Taxonomy" id="41514"/>
    <lineage>
        <taxon>Bacteria</taxon>
        <taxon>Pseudomonadati</taxon>
        <taxon>Pseudomonadota</taxon>
        <taxon>Gammaproteobacteria</taxon>
        <taxon>Enterobacterales</taxon>
        <taxon>Enterobacteriaceae</taxon>
        <taxon>Salmonella</taxon>
    </lineage>
</organism>
<evidence type="ECO:0000250" key="1">
    <source>
        <dbReference type="UniProtKB" id="P0AE22"/>
    </source>
</evidence>
<evidence type="ECO:0000255" key="2"/>
<evidence type="ECO:0000312" key="3">
    <source>
        <dbReference type="EMBL" id="ABX23258.1"/>
    </source>
</evidence>
<name>APHA_SALAR</name>
<feature type="signal peptide" evidence="2">
    <location>
        <begin position="1"/>
        <end position="23"/>
    </location>
</feature>
<feature type="chain" id="PRO_0000415229" description="Class B acid phosphatase" evidence="2">
    <location>
        <begin position="24"/>
        <end position="237"/>
    </location>
</feature>
<feature type="active site" description="Nucleophile" evidence="1">
    <location>
        <position position="69"/>
    </location>
</feature>
<feature type="active site" description="Proton donor" evidence="1">
    <location>
        <position position="71"/>
    </location>
</feature>
<feature type="binding site" evidence="1">
    <location>
        <position position="69"/>
    </location>
    <ligand>
        <name>Mg(2+)</name>
        <dbReference type="ChEBI" id="CHEBI:18420"/>
    </ligand>
</feature>
<feature type="binding site" evidence="1">
    <location>
        <position position="71"/>
    </location>
    <ligand>
        <name>Mg(2+)</name>
        <dbReference type="ChEBI" id="CHEBI:18420"/>
    </ligand>
</feature>
<feature type="binding site" evidence="1">
    <location>
        <begin position="137"/>
        <end position="138"/>
    </location>
    <ligand>
        <name>substrate</name>
    </ligand>
</feature>
<feature type="binding site" evidence="1">
    <location>
        <position position="177"/>
    </location>
    <ligand>
        <name>substrate</name>
    </ligand>
</feature>
<feature type="binding site" evidence="1">
    <location>
        <position position="192"/>
    </location>
    <ligand>
        <name>Mg(2+)</name>
        <dbReference type="ChEBI" id="CHEBI:18420"/>
    </ligand>
</feature>
<sequence length="237" mass="26238">MKKITLALSAVCLLFTLNHSANALVSSPSTLNPGTNVAKLAEQAPVHWVSVAQIENSLTGRPPMAVGFDIDDTVLFSSPGFWRGKKTYSPNSDDYLKNPAFWEKMNNGWDEFSIPKEVARQLIDMHVRRGDSIYFVTGRSQTKTETVTNTLADNFHIPAANMNPVIFAGDKPGQNTKIQWLQEKNIRIFYGDSDNDITAARDCGIRGIRILRAANSTYKPLPQAGAFGEEVIVNSEY</sequence>
<reference evidence="3" key="1">
    <citation type="submission" date="2007-11" db="EMBL/GenBank/DDBJ databases">
        <authorList>
            <consortium name="The Salmonella enterica serovar Arizonae Genome Sequencing Project"/>
            <person name="McClelland M."/>
            <person name="Sanderson E.K."/>
            <person name="Porwollik S."/>
            <person name="Spieth J."/>
            <person name="Clifton W.S."/>
            <person name="Fulton R."/>
            <person name="Chunyan W."/>
            <person name="Wollam A."/>
            <person name="Shah N."/>
            <person name="Pepin K."/>
            <person name="Bhonagiri V."/>
            <person name="Nash W."/>
            <person name="Johnson M."/>
            <person name="Thiruvilangam P."/>
            <person name="Wilson R."/>
        </authorList>
    </citation>
    <scope>NUCLEOTIDE SEQUENCE [LARGE SCALE GENOMIC DNA]</scope>
    <source>
        <strain>ATCC BAA-731 / CDC346-86 / RSK2980</strain>
    </source>
</reference>
<proteinExistence type="inferred from homology"/>
<protein>
    <recommendedName>
        <fullName evidence="1">Class B acid phosphatase</fullName>
        <shortName evidence="1">CBAP</shortName>
        <ecNumber evidence="1">3.1.3.2</ecNumber>
    </recommendedName>
</protein>
<dbReference type="EC" id="3.1.3.2" evidence="1"/>
<dbReference type="EMBL" id="CP000880">
    <property type="protein sequence ID" value="ABX23258.1"/>
    <property type="molecule type" value="Genomic_DNA"/>
</dbReference>
<dbReference type="SMR" id="A9MGN4"/>
<dbReference type="STRING" id="41514.SARI_03429"/>
<dbReference type="KEGG" id="ses:SARI_03429"/>
<dbReference type="HOGENOM" id="CLU_081496_0_0_6"/>
<dbReference type="Proteomes" id="UP000002084">
    <property type="component" value="Chromosome"/>
</dbReference>
<dbReference type="GO" id="GO:0030288">
    <property type="term" value="C:outer membrane-bounded periplasmic space"/>
    <property type="evidence" value="ECO:0007669"/>
    <property type="project" value="InterPro"/>
</dbReference>
<dbReference type="GO" id="GO:0003993">
    <property type="term" value="F:acid phosphatase activity"/>
    <property type="evidence" value="ECO:0007669"/>
    <property type="project" value="UniProtKB-EC"/>
</dbReference>
<dbReference type="GO" id="GO:0046872">
    <property type="term" value="F:metal ion binding"/>
    <property type="evidence" value="ECO:0007669"/>
    <property type="project" value="UniProtKB-KW"/>
</dbReference>
<dbReference type="CDD" id="cd07499">
    <property type="entry name" value="HAD_CBAP"/>
    <property type="match status" value="1"/>
</dbReference>
<dbReference type="FunFam" id="3.40.50.1000:FF:000049">
    <property type="entry name" value="Class B acid phosphatase"/>
    <property type="match status" value="1"/>
</dbReference>
<dbReference type="Gene3D" id="3.40.50.1000">
    <property type="entry name" value="HAD superfamily/HAD-like"/>
    <property type="match status" value="1"/>
</dbReference>
<dbReference type="InterPro" id="IPR005519">
    <property type="entry name" value="Acid_phosphat_B-like"/>
</dbReference>
<dbReference type="InterPro" id="IPR036412">
    <property type="entry name" value="HAD-like_sf"/>
</dbReference>
<dbReference type="InterPro" id="IPR010025">
    <property type="entry name" value="HAD-SF_ppase_IIIB_AphA"/>
</dbReference>
<dbReference type="InterPro" id="IPR023214">
    <property type="entry name" value="HAD_sf"/>
</dbReference>
<dbReference type="NCBIfam" id="TIGR01672">
    <property type="entry name" value="AphA"/>
    <property type="match status" value="1"/>
</dbReference>
<dbReference type="Pfam" id="PF03767">
    <property type="entry name" value="Acid_phosphat_B"/>
    <property type="match status" value="1"/>
</dbReference>
<dbReference type="PIRSF" id="PIRSF017818">
    <property type="entry name" value="Acid_Ptase_B"/>
    <property type="match status" value="1"/>
</dbReference>
<dbReference type="SFLD" id="SFLDG01127">
    <property type="entry name" value="C1.3:_Acid_Phosphatase_Like"/>
    <property type="match status" value="1"/>
</dbReference>
<dbReference type="SFLD" id="SFLDS00003">
    <property type="entry name" value="Haloacid_Dehalogenase"/>
    <property type="match status" value="1"/>
</dbReference>
<dbReference type="SUPFAM" id="SSF56784">
    <property type="entry name" value="HAD-like"/>
    <property type="match status" value="1"/>
</dbReference>